<gene>
    <name evidence="1" type="primary">aroQ</name>
    <name type="ordered locus">BB4391</name>
</gene>
<accession>Q7WF89</accession>
<organism>
    <name type="scientific">Bordetella bronchiseptica (strain ATCC BAA-588 / NCTC 13252 / RB50)</name>
    <name type="common">Alcaligenes bronchisepticus</name>
    <dbReference type="NCBI Taxonomy" id="257310"/>
    <lineage>
        <taxon>Bacteria</taxon>
        <taxon>Pseudomonadati</taxon>
        <taxon>Pseudomonadota</taxon>
        <taxon>Betaproteobacteria</taxon>
        <taxon>Burkholderiales</taxon>
        <taxon>Alcaligenaceae</taxon>
        <taxon>Bordetella</taxon>
    </lineage>
</organism>
<proteinExistence type="inferred from homology"/>
<comment type="function">
    <text evidence="1">Catalyzes a trans-dehydration via an enolate intermediate.</text>
</comment>
<comment type="catalytic activity">
    <reaction evidence="1">
        <text>3-dehydroquinate = 3-dehydroshikimate + H2O</text>
        <dbReference type="Rhea" id="RHEA:21096"/>
        <dbReference type="ChEBI" id="CHEBI:15377"/>
        <dbReference type="ChEBI" id="CHEBI:16630"/>
        <dbReference type="ChEBI" id="CHEBI:32364"/>
        <dbReference type="EC" id="4.2.1.10"/>
    </reaction>
</comment>
<comment type="pathway">
    <text evidence="1">Metabolic intermediate biosynthesis; chorismate biosynthesis; chorismate from D-erythrose 4-phosphate and phosphoenolpyruvate: step 3/7.</text>
</comment>
<comment type="subunit">
    <text evidence="1">Homododecamer.</text>
</comment>
<comment type="similarity">
    <text evidence="1">Belongs to the type-II 3-dehydroquinase family.</text>
</comment>
<feature type="chain" id="PRO_0000159874" description="3-dehydroquinate dehydratase">
    <location>
        <begin position="1"/>
        <end position="144"/>
    </location>
</feature>
<feature type="active site" description="Proton acceptor" evidence="1">
    <location>
        <position position="24"/>
    </location>
</feature>
<feature type="active site" description="Proton donor" evidence="1">
    <location>
        <position position="102"/>
    </location>
</feature>
<feature type="binding site" evidence="1">
    <location>
        <position position="76"/>
    </location>
    <ligand>
        <name>substrate</name>
    </ligand>
</feature>
<feature type="binding site" evidence="1">
    <location>
        <position position="82"/>
    </location>
    <ligand>
        <name>substrate</name>
    </ligand>
</feature>
<feature type="binding site" evidence="1">
    <location>
        <position position="89"/>
    </location>
    <ligand>
        <name>substrate</name>
    </ligand>
</feature>
<feature type="binding site" evidence="1">
    <location>
        <begin position="103"/>
        <end position="104"/>
    </location>
    <ligand>
        <name>substrate</name>
    </ligand>
</feature>
<feature type="binding site" evidence="1">
    <location>
        <position position="113"/>
    </location>
    <ligand>
        <name>substrate</name>
    </ligand>
</feature>
<feature type="site" description="Transition state stabilizer" evidence="1">
    <location>
        <position position="19"/>
    </location>
</feature>
<protein>
    <recommendedName>
        <fullName evidence="1">3-dehydroquinate dehydratase</fullName>
        <shortName evidence="1">3-dehydroquinase</shortName>
        <ecNumber evidence="1">4.2.1.10</ecNumber>
    </recommendedName>
    <alternativeName>
        <fullName evidence="1">Type II DHQase</fullName>
    </alternativeName>
</protein>
<dbReference type="EC" id="4.2.1.10" evidence="1"/>
<dbReference type="EMBL" id="BX640450">
    <property type="protein sequence ID" value="CAE34754.1"/>
    <property type="molecule type" value="Genomic_DNA"/>
</dbReference>
<dbReference type="RefSeq" id="WP_003814953.1">
    <property type="nucleotide sequence ID" value="NC_002927.3"/>
</dbReference>
<dbReference type="SMR" id="Q7WF89"/>
<dbReference type="GeneID" id="93205717"/>
<dbReference type="KEGG" id="bbr:BB4391"/>
<dbReference type="eggNOG" id="COG0757">
    <property type="taxonomic scope" value="Bacteria"/>
</dbReference>
<dbReference type="HOGENOM" id="CLU_090968_1_0_4"/>
<dbReference type="UniPathway" id="UPA00053">
    <property type="reaction ID" value="UER00086"/>
</dbReference>
<dbReference type="Proteomes" id="UP000001027">
    <property type="component" value="Chromosome"/>
</dbReference>
<dbReference type="GO" id="GO:0003855">
    <property type="term" value="F:3-dehydroquinate dehydratase activity"/>
    <property type="evidence" value="ECO:0007669"/>
    <property type="project" value="UniProtKB-UniRule"/>
</dbReference>
<dbReference type="GO" id="GO:0008652">
    <property type="term" value="P:amino acid biosynthetic process"/>
    <property type="evidence" value="ECO:0007669"/>
    <property type="project" value="UniProtKB-KW"/>
</dbReference>
<dbReference type="GO" id="GO:0009073">
    <property type="term" value="P:aromatic amino acid family biosynthetic process"/>
    <property type="evidence" value="ECO:0007669"/>
    <property type="project" value="UniProtKB-KW"/>
</dbReference>
<dbReference type="GO" id="GO:0009423">
    <property type="term" value="P:chorismate biosynthetic process"/>
    <property type="evidence" value="ECO:0007669"/>
    <property type="project" value="UniProtKB-UniRule"/>
</dbReference>
<dbReference type="GO" id="GO:0019631">
    <property type="term" value="P:quinate catabolic process"/>
    <property type="evidence" value="ECO:0007669"/>
    <property type="project" value="TreeGrafter"/>
</dbReference>
<dbReference type="CDD" id="cd00466">
    <property type="entry name" value="DHQase_II"/>
    <property type="match status" value="1"/>
</dbReference>
<dbReference type="Gene3D" id="3.40.50.9100">
    <property type="entry name" value="Dehydroquinase, class II"/>
    <property type="match status" value="1"/>
</dbReference>
<dbReference type="HAMAP" id="MF_00169">
    <property type="entry name" value="AroQ"/>
    <property type="match status" value="1"/>
</dbReference>
<dbReference type="InterPro" id="IPR001874">
    <property type="entry name" value="DHquinase_II"/>
</dbReference>
<dbReference type="InterPro" id="IPR018509">
    <property type="entry name" value="DHquinase_II_CS"/>
</dbReference>
<dbReference type="InterPro" id="IPR036441">
    <property type="entry name" value="DHquinase_II_sf"/>
</dbReference>
<dbReference type="NCBIfam" id="TIGR01088">
    <property type="entry name" value="aroQ"/>
    <property type="match status" value="1"/>
</dbReference>
<dbReference type="NCBIfam" id="NF003804">
    <property type="entry name" value="PRK05395.1-1"/>
    <property type="match status" value="1"/>
</dbReference>
<dbReference type="NCBIfam" id="NF003805">
    <property type="entry name" value="PRK05395.1-2"/>
    <property type="match status" value="1"/>
</dbReference>
<dbReference type="NCBIfam" id="NF003806">
    <property type="entry name" value="PRK05395.1-3"/>
    <property type="match status" value="1"/>
</dbReference>
<dbReference type="NCBIfam" id="NF003807">
    <property type="entry name" value="PRK05395.1-4"/>
    <property type="match status" value="1"/>
</dbReference>
<dbReference type="PANTHER" id="PTHR21272">
    <property type="entry name" value="CATABOLIC 3-DEHYDROQUINASE"/>
    <property type="match status" value="1"/>
</dbReference>
<dbReference type="PANTHER" id="PTHR21272:SF3">
    <property type="entry name" value="CATABOLIC 3-DEHYDROQUINASE"/>
    <property type="match status" value="1"/>
</dbReference>
<dbReference type="Pfam" id="PF01220">
    <property type="entry name" value="DHquinase_II"/>
    <property type="match status" value="1"/>
</dbReference>
<dbReference type="PIRSF" id="PIRSF001399">
    <property type="entry name" value="DHquinase_II"/>
    <property type="match status" value="1"/>
</dbReference>
<dbReference type="SUPFAM" id="SSF52304">
    <property type="entry name" value="Type II 3-dehydroquinate dehydratase"/>
    <property type="match status" value="1"/>
</dbReference>
<dbReference type="PROSITE" id="PS01029">
    <property type="entry name" value="DEHYDROQUINASE_II"/>
    <property type="match status" value="1"/>
</dbReference>
<reference key="1">
    <citation type="journal article" date="2003" name="Nat. Genet.">
        <title>Comparative analysis of the genome sequences of Bordetella pertussis, Bordetella parapertussis and Bordetella bronchiseptica.</title>
        <authorList>
            <person name="Parkhill J."/>
            <person name="Sebaihia M."/>
            <person name="Preston A."/>
            <person name="Murphy L.D."/>
            <person name="Thomson N.R."/>
            <person name="Harris D.E."/>
            <person name="Holden M.T.G."/>
            <person name="Churcher C.M."/>
            <person name="Bentley S.D."/>
            <person name="Mungall K.L."/>
            <person name="Cerdeno-Tarraga A.-M."/>
            <person name="Temple L."/>
            <person name="James K.D."/>
            <person name="Harris B."/>
            <person name="Quail M.A."/>
            <person name="Achtman M."/>
            <person name="Atkin R."/>
            <person name="Baker S."/>
            <person name="Basham D."/>
            <person name="Bason N."/>
            <person name="Cherevach I."/>
            <person name="Chillingworth T."/>
            <person name="Collins M."/>
            <person name="Cronin A."/>
            <person name="Davis P."/>
            <person name="Doggett J."/>
            <person name="Feltwell T."/>
            <person name="Goble A."/>
            <person name="Hamlin N."/>
            <person name="Hauser H."/>
            <person name="Holroyd S."/>
            <person name="Jagels K."/>
            <person name="Leather S."/>
            <person name="Moule S."/>
            <person name="Norberczak H."/>
            <person name="O'Neil S."/>
            <person name="Ormond D."/>
            <person name="Price C."/>
            <person name="Rabbinowitsch E."/>
            <person name="Rutter S."/>
            <person name="Sanders M."/>
            <person name="Saunders D."/>
            <person name="Seeger K."/>
            <person name="Sharp S."/>
            <person name="Simmonds M."/>
            <person name="Skelton J."/>
            <person name="Squares R."/>
            <person name="Squares S."/>
            <person name="Stevens K."/>
            <person name="Unwin L."/>
            <person name="Whitehead S."/>
            <person name="Barrell B.G."/>
            <person name="Maskell D.J."/>
        </authorList>
    </citation>
    <scope>NUCLEOTIDE SEQUENCE [LARGE SCALE GENOMIC DNA]</scope>
    <source>
        <strain>ATCC BAA-588 / NCTC 13252 / RB50</strain>
    </source>
</reference>
<keyword id="KW-0028">Amino-acid biosynthesis</keyword>
<keyword id="KW-0057">Aromatic amino acid biosynthesis</keyword>
<keyword id="KW-0456">Lyase</keyword>
<evidence type="ECO:0000255" key="1">
    <source>
        <dbReference type="HAMAP-Rule" id="MF_00169"/>
    </source>
</evidence>
<sequence length="144" mass="15386">MAQRILVLHGPNLNLLGTREPHIYGSLTLAQIDQGLAALAGQLGVALTSWQSNHEGALVERIQAAAADGTDFIIINAAAYTHTSVAIRDALAAVAIPFIEVHLSNLYKRDSFRQHSYLSDLAIGLITGLGADGYEAALRYAARH</sequence>
<name>AROQ_BORBR</name>